<accession>B5R4P2</accession>
<keyword id="KW-0030">Aminoacyl-tRNA synthetase</keyword>
<keyword id="KW-0067">ATP-binding</keyword>
<keyword id="KW-0963">Cytoplasm</keyword>
<keyword id="KW-0436">Ligase</keyword>
<keyword id="KW-0547">Nucleotide-binding</keyword>
<keyword id="KW-0648">Protein biosynthesis</keyword>
<evidence type="ECO:0000255" key="1">
    <source>
        <dbReference type="HAMAP-Rule" id="MF_00255"/>
    </source>
</evidence>
<organism>
    <name type="scientific">Salmonella enteritidis PT4 (strain P125109)</name>
    <dbReference type="NCBI Taxonomy" id="550537"/>
    <lineage>
        <taxon>Bacteria</taxon>
        <taxon>Pseudomonadati</taxon>
        <taxon>Pseudomonadota</taxon>
        <taxon>Gammaproteobacteria</taxon>
        <taxon>Enterobacterales</taxon>
        <taxon>Enterobacteriaceae</taxon>
        <taxon>Salmonella</taxon>
    </lineage>
</organism>
<name>SYGB_SALEP</name>
<proteinExistence type="inferred from homology"/>
<gene>
    <name evidence="1" type="primary">glyS</name>
    <name type="ordered locus">SEN3477</name>
</gene>
<reference key="1">
    <citation type="journal article" date="2008" name="Genome Res.">
        <title>Comparative genome analysis of Salmonella enteritidis PT4 and Salmonella gallinarum 287/91 provides insights into evolutionary and host adaptation pathways.</title>
        <authorList>
            <person name="Thomson N.R."/>
            <person name="Clayton D.J."/>
            <person name="Windhorst D."/>
            <person name="Vernikos G."/>
            <person name="Davidson S."/>
            <person name="Churcher C."/>
            <person name="Quail M.A."/>
            <person name="Stevens M."/>
            <person name="Jones M.A."/>
            <person name="Watson M."/>
            <person name="Barron A."/>
            <person name="Layton A."/>
            <person name="Pickard D."/>
            <person name="Kingsley R.A."/>
            <person name="Bignell A."/>
            <person name="Clark L."/>
            <person name="Harris B."/>
            <person name="Ormond D."/>
            <person name="Abdellah Z."/>
            <person name="Brooks K."/>
            <person name="Cherevach I."/>
            <person name="Chillingworth T."/>
            <person name="Woodward J."/>
            <person name="Norberczak H."/>
            <person name="Lord A."/>
            <person name="Arrowsmith C."/>
            <person name="Jagels K."/>
            <person name="Moule S."/>
            <person name="Mungall K."/>
            <person name="Saunders M."/>
            <person name="Whitehead S."/>
            <person name="Chabalgoity J.A."/>
            <person name="Maskell D."/>
            <person name="Humphreys T."/>
            <person name="Roberts M."/>
            <person name="Barrow P.A."/>
            <person name="Dougan G."/>
            <person name="Parkhill J."/>
        </authorList>
    </citation>
    <scope>NUCLEOTIDE SEQUENCE [LARGE SCALE GENOMIC DNA]</scope>
    <source>
        <strain>P125109</strain>
    </source>
</reference>
<dbReference type="EC" id="6.1.1.14" evidence="1"/>
<dbReference type="EMBL" id="AM933172">
    <property type="protein sequence ID" value="CAR35056.1"/>
    <property type="molecule type" value="Genomic_DNA"/>
</dbReference>
<dbReference type="RefSeq" id="WP_001291741.1">
    <property type="nucleotide sequence ID" value="NC_011294.1"/>
</dbReference>
<dbReference type="SMR" id="B5R4P2"/>
<dbReference type="KEGG" id="set:SEN3477"/>
<dbReference type="HOGENOM" id="CLU_007220_2_2_6"/>
<dbReference type="Proteomes" id="UP000000613">
    <property type="component" value="Chromosome"/>
</dbReference>
<dbReference type="GO" id="GO:0005829">
    <property type="term" value="C:cytosol"/>
    <property type="evidence" value="ECO:0007669"/>
    <property type="project" value="TreeGrafter"/>
</dbReference>
<dbReference type="GO" id="GO:0004814">
    <property type="term" value="F:arginine-tRNA ligase activity"/>
    <property type="evidence" value="ECO:0007669"/>
    <property type="project" value="InterPro"/>
</dbReference>
<dbReference type="GO" id="GO:0005524">
    <property type="term" value="F:ATP binding"/>
    <property type="evidence" value="ECO:0007669"/>
    <property type="project" value="UniProtKB-UniRule"/>
</dbReference>
<dbReference type="GO" id="GO:0004820">
    <property type="term" value="F:glycine-tRNA ligase activity"/>
    <property type="evidence" value="ECO:0007669"/>
    <property type="project" value="UniProtKB-UniRule"/>
</dbReference>
<dbReference type="GO" id="GO:0006420">
    <property type="term" value="P:arginyl-tRNA aminoacylation"/>
    <property type="evidence" value="ECO:0007669"/>
    <property type="project" value="InterPro"/>
</dbReference>
<dbReference type="GO" id="GO:0006426">
    <property type="term" value="P:glycyl-tRNA aminoacylation"/>
    <property type="evidence" value="ECO:0007669"/>
    <property type="project" value="UniProtKB-UniRule"/>
</dbReference>
<dbReference type="HAMAP" id="MF_00255">
    <property type="entry name" value="Gly_tRNA_synth_beta"/>
    <property type="match status" value="1"/>
</dbReference>
<dbReference type="InterPro" id="IPR008909">
    <property type="entry name" value="DALR_anticod-bd"/>
</dbReference>
<dbReference type="InterPro" id="IPR015944">
    <property type="entry name" value="Gly-tRNA-synth_bsu"/>
</dbReference>
<dbReference type="InterPro" id="IPR006194">
    <property type="entry name" value="Gly-tRNA-synth_heterodimer"/>
</dbReference>
<dbReference type="NCBIfam" id="TIGR00211">
    <property type="entry name" value="glyS"/>
    <property type="match status" value="1"/>
</dbReference>
<dbReference type="PANTHER" id="PTHR30075:SF2">
    <property type="entry name" value="GLYCINE--TRNA LIGASE, CHLOROPLASTIC_MITOCHONDRIAL 2"/>
    <property type="match status" value="1"/>
</dbReference>
<dbReference type="PANTHER" id="PTHR30075">
    <property type="entry name" value="GLYCYL-TRNA SYNTHETASE"/>
    <property type="match status" value="1"/>
</dbReference>
<dbReference type="Pfam" id="PF05746">
    <property type="entry name" value="DALR_1"/>
    <property type="match status" value="1"/>
</dbReference>
<dbReference type="Pfam" id="PF02092">
    <property type="entry name" value="tRNA_synt_2f"/>
    <property type="match status" value="1"/>
</dbReference>
<dbReference type="PRINTS" id="PR01045">
    <property type="entry name" value="TRNASYNTHGB"/>
</dbReference>
<dbReference type="SUPFAM" id="SSF109604">
    <property type="entry name" value="HD-domain/PDEase-like"/>
    <property type="match status" value="1"/>
</dbReference>
<dbReference type="PROSITE" id="PS50861">
    <property type="entry name" value="AA_TRNA_LIGASE_II_GLYAB"/>
    <property type="match status" value="1"/>
</dbReference>
<comment type="catalytic activity">
    <reaction evidence="1">
        <text>tRNA(Gly) + glycine + ATP = glycyl-tRNA(Gly) + AMP + diphosphate</text>
        <dbReference type="Rhea" id="RHEA:16013"/>
        <dbReference type="Rhea" id="RHEA-COMP:9664"/>
        <dbReference type="Rhea" id="RHEA-COMP:9683"/>
        <dbReference type="ChEBI" id="CHEBI:30616"/>
        <dbReference type="ChEBI" id="CHEBI:33019"/>
        <dbReference type="ChEBI" id="CHEBI:57305"/>
        <dbReference type="ChEBI" id="CHEBI:78442"/>
        <dbReference type="ChEBI" id="CHEBI:78522"/>
        <dbReference type="ChEBI" id="CHEBI:456215"/>
        <dbReference type="EC" id="6.1.1.14"/>
    </reaction>
</comment>
<comment type="subunit">
    <text evidence="1">Tetramer of two alpha and two beta subunits.</text>
</comment>
<comment type="subcellular location">
    <subcellularLocation>
        <location evidence="1">Cytoplasm</location>
    </subcellularLocation>
</comment>
<comment type="similarity">
    <text evidence="1">Belongs to the class-II aminoacyl-tRNA synthetase family.</text>
</comment>
<protein>
    <recommendedName>
        <fullName evidence="1">Glycine--tRNA ligase beta subunit</fullName>
        <ecNumber evidence="1">6.1.1.14</ecNumber>
    </recommendedName>
    <alternativeName>
        <fullName evidence="1">Glycyl-tRNA synthetase beta subunit</fullName>
        <shortName evidence="1">GlyRS</shortName>
    </alternativeName>
</protein>
<feature type="chain" id="PRO_1000101333" description="Glycine--tRNA ligase beta subunit">
    <location>
        <begin position="1"/>
        <end position="689"/>
    </location>
</feature>
<sequence>MSEKTFLVEIGTEELPPKALRSLAESFAANFTAELDNAGLAHGNVEWFAAPRRLALKVANLAESQPDREVEKRGPAIAQAFDAEGKPSKAAEGWARGCGITVDQAERLKTDKGEWLLYRAHVKGESTEALVPNMVATSLAKLPIPKLMRWGASDVHFVRPVHTVTLLLGDKVIPATILGIQSDRVIRGHRFMGEPEFTIDNADQYPQILLERGKVIADYEARKAKIKADAEEAARKIGGNADLSESLLEEVASLVEWPVVLTAKFEEKFLSVPAEALVYTMKGDQKYFPVYDNAGKLLPNFIFVANIESKDPTQIISGNEKVVRPRLADAEFFFNTDRKKRLEDHLPRLQTVLFQQQLGTLRDKTDRIQALAGWIAGQIGADVNHATRAGLLSKCDLMTNMVFEFTDTQGVMGMHYARHDGEAEDVAVALNEQYQPRFAGDDLPSNPVACALAIADKMDTLAGIFGIGQHPKGDKDPFALRRAALGVLRIIVEKNLALDLQTLTEEAVRLYGDKLTNANVVDDVIDFMLGRFRAWYQDEGYTVDTIQAVLARRPTRPADFDARMKAVSHFRTLEEASALAAANKRVSNILAKATEPLNDIVHASVLKEAAEIELARHLVVLRDKLQPYFADGRYQEALIELAALRAPVDEFFENVMVNAEEKDIRINRLTLLSKLRELFLQVADISLLQ</sequence>